<feature type="chain" id="PRO_1000068850" description="Probable alpha-L-glutamate ligase">
    <location>
        <begin position="1"/>
        <end position="301"/>
    </location>
</feature>
<feature type="domain" description="ATP-grasp" evidence="1">
    <location>
        <begin position="104"/>
        <end position="287"/>
    </location>
</feature>
<feature type="binding site" evidence="1">
    <location>
        <position position="141"/>
    </location>
    <ligand>
        <name>ATP</name>
        <dbReference type="ChEBI" id="CHEBI:30616"/>
    </ligand>
</feature>
<feature type="binding site" evidence="1">
    <location>
        <begin position="178"/>
        <end position="179"/>
    </location>
    <ligand>
        <name>ATP</name>
        <dbReference type="ChEBI" id="CHEBI:30616"/>
    </ligand>
</feature>
<feature type="binding site" evidence="1">
    <location>
        <position position="187"/>
    </location>
    <ligand>
        <name>ATP</name>
        <dbReference type="ChEBI" id="CHEBI:30616"/>
    </ligand>
</feature>
<feature type="binding site" evidence="1">
    <location>
        <begin position="211"/>
        <end position="213"/>
    </location>
    <ligand>
        <name>ATP</name>
        <dbReference type="ChEBI" id="CHEBI:30616"/>
    </ligand>
</feature>
<feature type="binding site" evidence="1">
    <location>
        <position position="248"/>
    </location>
    <ligand>
        <name>Mg(2+)</name>
        <dbReference type="ChEBI" id="CHEBI:18420"/>
        <label>1</label>
    </ligand>
</feature>
<feature type="binding site" evidence="1">
    <location>
        <position position="248"/>
    </location>
    <ligand>
        <name>Mn(2+)</name>
        <dbReference type="ChEBI" id="CHEBI:29035"/>
        <label>1</label>
    </ligand>
</feature>
<feature type="binding site" evidence="1">
    <location>
        <position position="260"/>
    </location>
    <ligand>
        <name>Mg(2+)</name>
        <dbReference type="ChEBI" id="CHEBI:18420"/>
        <label>1</label>
    </ligand>
</feature>
<feature type="binding site" evidence="1">
    <location>
        <position position="260"/>
    </location>
    <ligand>
        <name>Mg(2+)</name>
        <dbReference type="ChEBI" id="CHEBI:18420"/>
        <label>2</label>
    </ligand>
</feature>
<feature type="binding site" evidence="1">
    <location>
        <position position="260"/>
    </location>
    <ligand>
        <name>Mn(2+)</name>
        <dbReference type="ChEBI" id="CHEBI:29035"/>
        <label>1</label>
    </ligand>
</feature>
<feature type="binding site" evidence="1">
    <location>
        <position position="260"/>
    </location>
    <ligand>
        <name>Mn(2+)</name>
        <dbReference type="ChEBI" id="CHEBI:29035"/>
        <label>2</label>
    </ligand>
</feature>
<feature type="binding site" evidence="1">
    <location>
        <position position="262"/>
    </location>
    <ligand>
        <name>Mg(2+)</name>
        <dbReference type="ChEBI" id="CHEBI:18420"/>
        <label>2</label>
    </ligand>
</feature>
<feature type="binding site" evidence="1">
    <location>
        <position position="262"/>
    </location>
    <ligand>
        <name>Mn(2+)</name>
        <dbReference type="ChEBI" id="CHEBI:29035"/>
        <label>2</label>
    </ligand>
</feature>
<reference key="1">
    <citation type="submission" date="2007-05" db="EMBL/GenBank/DDBJ databases">
        <title>Complete sequence of Pseudomonas putida F1.</title>
        <authorList>
            <consortium name="US DOE Joint Genome Institute"/>
            <person name="Copeland A."/>
            <person name="Lucas S."/>
            <person name="Lapidus A."/>
            <person name="Barry K."/>
            <person name="Detter J.C."/>
            <person name="Glavina del Rio T."/>
            <person name="Hammon N."/>
            <person name="Israni S."/>
            <person name="Dalin E."/>
            <person name="Tice H."/>
            <person name="Pitluck S."/>
            <person name="Chain P."/>
            <person name="Malfatti S."/>
            <person name="Shin M."/>
            <person name="Vergez L."/>
            <person name="Schmutz J."/>
            <person name="Larimer F."/>
            <person name="Land M."/>
            <person name="Hauser L."/>
            <person name="Kyrpides N."/>
            <person name="Lykidis A."/>
            <person name="Parales R."/>
            <person name="Richardson P."/>
        </authorList>
    </citation>
    <scope>NUCLEOTIDE SEQUENCE [LARGE SCALE GENOMIC DNA]</scope>
    <source>
        <strain>ATCC 700007 / DSM 6899 / JCM 31910 / BCRC 17059 / LMG 24140 / F1</strain>
    </source>
</reference>
<name>RIMK_PSEP1</name>
<accession>A5VX27</accession>
<organism>
    <name type="scientific">Pseudomonas putida (strain ATCC 700007 / DSM 6899 / JCM 31910 / BCRC 17059 / LMG 24140 / F1)</name>
    <dbReference type="NCBI Taxonomy" id="351746"/>
    <lineage>
        <taxon>Bacteria</taxon>
        <taxon>Pseudomonadati</taxon>
        <taxon>Pseudomonadota</taxon>
        <taxon>Gammaproteobacteria</taxon>
        <taxon>Pseudomonadales</taxon>
        <taxon>Pseudomonadaceae</taxon>
        <taxon>Pseudomonas</taxon>
    </lineage>
</organism>
<keyword id="KW-0067">ATP-binding</keyword>
<keyword id="KW-0436">Ligase</keyword>
<keyword id="KW-0460">Magnesium</keyword>
<keyword id="KW-0464">Manganese</keyword>
<keyword id="KW-0479">Metal-binding</keyword>
<keyword id="KW-0547">Nucleotide-binding</keyword>
<keyword id="KW-0648">Protein biosynthesis</keyword>
<evidence type="ECO:0000255" key="1">
    <source>
        <dbReference type="HAMAP-Rule" id="MF_01552"/>
    </source>
</evidence>
<proteinExistence type="inferred from homology"/>
<dbReference type="EC" id="6.3.2.-" evidence="1"/>
<dbReference type="EMBL" id="CP000712">
    <property type="protein sequence ID" value="ABQ76437.1"/>
    <property type="molecule type" value="Genomic_DNA"/>
</dbReference>
<dbReference type="SMR" id="A5VX27"/>
<dbReference type="KEGG" id="ppf:Pput_0263"/>
<dbReference type="eggNOG" id="COG0189">
    <property type="taxonomic scope" value="Bacteria"/>
</dbReference>
<dbReference type="HOGENOM" id="CLU_054353_0_1_6"/>
<dbReference type="GO" id="GO:0005737">
    <property type="term" value="C:cytoplasm"/>
    <property type="evidence" value="ECO:0007669"/>
    <property type="project" value="TreeGrafter"/>
</dbReference>
<dbReference type="GO" id="GO:0005524">
    <property type="term" value="F:ATP binding"/>
    <property type="evidence" value="ECO:0007669"/>
    <property type="project" value="UniProtKB-UniRule"/>
</dbReference>
<dbReference type="GO" id="GO:0046872">
    <property type="term" value="F:metal ion binding"/>
    <property type="evidence" value="ECO:0007669"/>
    <property type="project" value="UniProtKB-KW"/>
</dbReference>
<dbReference type="GO" id="GO:0018169">
    <property type="term" value="F:ribosomal S6-glutamic acid ligase activity"/>
    <property type="evidence" value="ECO:0007669"/>
    <property type="project" value="TreeGrafter"/>
</dbReference>
<dbReference type="GO" id="GO:0036211">
    <property type="term" value="P:protein modification process"/>
    <property type="evidence" value="ECO:0007669"/>
    <property type="project" value="InterPro"/>
</dbReference>
<dbReference type="GO" id="GO:0009432">
    <property type="term" value="P:SOS response"/>
    <property type="evidence" value="ECO:0007669"/>
    <property type="project" value="TreeGrafter"/>
</dbReference>
<dbReference type="GO" id="GO:0006412">
    <property type="term" value="P:translation"/>
    <property type="evidence" value="ECO:0007669"/>
    <property type="project" value="UniProtKB-KW"/>
</dbReference>
<dbReference type="FunFam" id="3.40.50.20:FF:000004">
    <property type="entry name" value="Probable alpha-L-glutamate ligase"/>
    <property type="match status" value="1"/>
</dbReference>
<dbReference type="FunFam" id="3.30.1490.20:FF:000005">
    <property type="entry name" value="Probable alpha-L-glutamate ligase 1"/>
    <property type="match status" value="1"/>
</dbReference>
<dbReference type="FunFam" id="3.30.470.20:FF:000016">
    <property type="entry name" value="Ribosomal protein S6--L-glutamate ligase"/>
    <property type="match status" value="1"/>
</dbReference>
<dbReference type="Gene3D" id="3.40.50.20">
    <property type="match status" value="1"/>
</dbReference>
<dbReference type="Gene3D" id="3.30.1490.20">
    <property type="entry name" value="ATP-grasp fold, A domain"/>
    <property type="match status" value="1"/>
</dbReference>
<dbReference type="Gene3D" id="3.30.470.20">
    <property type="entry name" value="ATP-grasp fold, B domain"/>
    <property type="match status" value="1"/>
</dbReference>
<dbReference type="HAMAP" id="MF_01552">
    <property type="entry name" value="RimK"/>
    <property type="match status" value="1"/>
</dbReference>
<dbReference type="InterPro" id="IPR011761">
    <property type="entry name" value="ATP-grasp"/>
</dbReference>
<dbReference type="InterPro" id="IPR013651">
    <property type="entry name" value="ATP-grasp_RimK-type"/>
</dbReference>
<dbReference type="InterPro" id="IPR013815">
    <property type="entry name" value="ATP_grasp_subdomain_1"/>
</dbReference>
<dbReference type="InterPro" id="IPR023533">
    <property type="entry name" value="RimK"/>
</dbReference>
<dbReference type="InterPro" id="IPR041107">
    <property type="entry name" value="Rimk_N"/>
</dbReference>
<dbReference type="InterPro" id="IPR004666">
    <property type="entry name" value="Rp_bS6_RimK/Lys_biosynth_LsyX"/>
</dbReference>
<dbReference type="NCBIfam" id="NF007764">
    <property type="entry name" value="PRK10446.1"/>
    <property type="match status" value="1"/>
</dbReference>
<dbReference type="NCBIfam" id="TIGR00768">
    <property type="entry name" value="rimK_fam"/>
    <property type="match status" value="1"/>
</dbReference>
<dbReference type="PANTHER" id="PTHR21621:SF7">
    <property type="entry name" value="RIBOSOMAL PROTEIN BS6--L-GLUTAMATE LIGASE"/>
    <property type="match status" value="1"/>
</dbReference>
<dbReference type="PANTHER" id="PTHR21621">
    <property type="entry name" value="RIBOSOMAL PROTEIN S6 MODIFICATION PROTEIN"/>
    <property type="match status" value="1"/>
</dbReference>
<dbReference type="Pfam" id="PF08443">
    <property type="entry name" value="RimK"/>
    <property type="match status" value="1"/>
</dbReference>
<dbReference type="Pfam" id="PF18030">
    <property type="entry name" value="Rimk_N"/>
    <property type="match status" value="1"/>
</dbReference>
<dbReference type="SUPFAM" id="SSF56059">
    <property type="entry name" value="Glutathione synthetase ATP-binding domain-like"/>
    <property type="match status" value="1"/>
</dbReference>
<dbReference type="PROSITE" id="PS50975">
    <property type="entry name" value="ATP_GRASP"/>
    <property type="match status" value="1"/>
</dbReference>
<sequence>MKIAVLSRNPRLYSTRRLVEAGTQRGHEMVVIDTLRAYMNIASHKPQIHYRGKPLEGFDAVIPRIGASVTFYGCAVLRQFEMMGVYPLNESVAIARSRDKLRSLQLLSRRGIGLPITGFAHSPDDIPDLIQMVNGAPLVIKVLEGTQGIGVVLCETPQAAESVIEAFMGLKQNIMVQEYIKEAGGADIRCFVVGDKVIASMKRQAKPGEFRSNLHRGGVASLIKITPEERITAIRAAKVMGLSVAGVDILRSNHGPLVMEVNSSPGLEGIEVTTGKNVAGMIIEHLEKNGGPNQTRTKGKG</sequence>
<gene>
    <name evidence="1" type="primary">rimK</name>
    <name type="ordered locus">Pput_0263</name>
</gene>
<protein>
    <recommendedName>
        <fullName evidence="1">Probable alpha-L-glutamate ligase</fullName>
        <ecNumber evidence="1">6.3.2.-</ecNumber>
    </recommendedName>
</protein>
<comment type="cofactor">
    <cofactor evidence="1">
        <name>Mg(2+)</name>
        <dbReference type="ChEBI" id="CHEBI:18420"/>
    </cofactor>
    <cofactor evidence="1">
        <name>Mn(2+)</name>
        <dbReference type="ChEBI" id="CHEBI:29035"/>
    </cofactor>
    <text evidence="1">Binds 2 magnesium or manganese ions per subunit.</text>
</comment>
<comment type="similarity">
    <text evidence="1">Belongs to the RimK family.</text>
</comment>